<keyword id="KW-0963">Cytoplasm</keyword>
<keyword id="KW-0251">Elongation factor</keyword>
<keyword id="KW-0342">GTP-binding</keyword>
<keyword id="KW-0547">Nucleotide-binding</keyword>
<keyword id="KW-0648">Protein biosynthesis</keyword>
<keyword id="KW-1185">Reference proteome</keyword>
<feature type="chain" id="PRO_0000091229" description="Elongation factor G">
    <location>
        <begin position="1"/>
        <end position="693"/>
    </location>
</feature>
<feature type="domain" description="tr-type G">
    <location>
        <begin position="8"/>
        <end position="282"/>
    </location>
</feature>
<feature type="binding site" evidence="1">
    <location>
        <begin position="17"/>
        <end position="24"/>
    </location>
    <ligand>
        <name>GTP</name>
        <dbReference type="ChEBI" id="CHEBI:37565"/>
    </ligand>
</feature>
<feature type="binding site" evidence="1">
    <location>
        <begin position="81"/>
        <end position="85"/>
    </location>
    <ligand>
        <name>GTP</name>
        <dbReference type="ChEBI" id="CHEBI:37565"/>
    </ligand>
</feature>
<feature type="binding site" evidence="1">
    <location>
        <begin position="135"/>
        <end position="138"/>
    </location>
    <ligand>
        <name>GTP</name>
        <dbReference type="ChEBI" id="CHEBI:37565"/>
    </ligand>
</feature>
<sequence length="693" mass="76664">MAREFSLEKTRNIGIMAHVDAGKTTTTERILYYTGKIHKIGETHEGASQMDWMEQEQERGITITSAATTAQWKDHRVNIIDTPGHVDFTIEVQRSLRVLDGAVTVLDAQSGVEPQTETVWRQATEYGVPRIVFANKMDKIGADFLYSVSTLHDRLQANAHPIQLPIGAEDDFEGIIDLVTMKAEIYTNDLGTDILIEDIPADYLDQAKEYREKLIEAVAETDEDLMMKYLEGEEITETELKAAIRKATINVEFFPVLAGSAFKNKGVQMMLDAVVDYLPSPLDIPPIKGVNPDTDEEEERPASDDEPFAALAFKIMTDPFVGRLTFFRVYSGILNSGSYVLNTSKGKRERIGRILQMHANSRQEIETVYAGDIAAAVGLKETTTGDSLTDEKAKVILESIEVPEPVIQLMVEPKSKADQDKMGIALQKLAEEDPTFRVETNVETGETVISGMGELHLDVLVDRMKREFKVEANVGAPQVSYRETFRQATQARGFFKRQSGGKGQFGDVWIEFTPNEEGKGFEFENAIVGGVVPREFVPAVEKGLIESMANGVLAGYPIVDVKAKLYDGSYHDVDSSETAFKIAASLALKEAAKTAKPVILEPMMLVTITVPEENLGDVMGHVTARRGRVDGMEAHGNSQIVRAFVPLAEMFGYATVLRSASQGRGTFMMVFDHYEDVPKSVQEEIIKKNAGEA</sequence>
<name>EFG_STRMU</name>
<protein>
    <recommendedName>
        <fullName evidence="1">Elongation factor G</fullName>
        <shortName evidence="1">EF-G</shortName>
    </recommendedName>
</protein>
<organism>
    <name type="scientific">Streptococcus mutans serotype c (strain ATCC 700610 / UA159)</name>
    <dbReference type="NCBI Taxonomy" id="210007"/>
    <lineage>
        <taxon>Bacteria</taxon>
        <taxon>Bacillati</taxon>
        <taxon>Bacillota</taxon>
        <taxon>Bacilli</taxon>
        <taxon>Lactobacillales</taxon>
        <taxon>Streptococcaceae</taxon>
        <taxon>Streptococcus</taxon>
    </lineage>
</organism>
<proteinExistence type="inferred from homology"/>
<dbReference type="EMBL" id="AE014133">
    <property type="protein sequence ID" value="AAN58117.1"/>
    <property type="molecule type" value="Genomic_DNA"/>
</dbReference>
<dbReference type="RefSeq" id="NP_720811.1">
    <property type="nucleotide sequence ID" value="NC_004350.2"/>
</dbReference>
<dbReference type="RefSeq" id="WP_002262490.1">
    <property type="nucleotide sequence ID" value="NC_004350.2"/>
</dbReference>
<dbReference type="SMR" id="Q8DVV4"/>
<dbReference type="STRING" id="210007.SMU_359"/>
<dbReference type="GeneID" id="93860062"/>
<dbReference type="KEGG" id="smu:SMU_359"/>
<dbReference type="PATRIC" id="fig|210007.7.peg.313"/>
<dbReference type="eggNOG" id="COG0480">
    <property type="taxonomic scope" value="Bacteria"/>
</dbReference>
<dbReference type="HOGENOM" id="CLU_002794_4_1_9"/>
<dbReference type="OrthoDB" id="9804431at2"/>
<dbReference type="PhylomeDB" id="Q8DVV4"/>
<dbReference type="Proteomes" id="UP000002512">
    <property type="component" value="Chromosome"/>
</dbReference>
<dbReference type="GO" id="GO:0005737">
    <property type="term" value="C:cytoplasm"/>
    <property type="evidence" value="ECO:0007669"/>
    <property type="project" value="UniProtKB-SubCell"/>
</dbReference>
<dbReference type="GO" id="GO:0005525">
    <property type="term" value="F:GTP binding"/>
    <property type="evidence" value="ECO:0007669"/>
    <property type="project" value="UniProtKB-UniRule"/>
</dbReference>
<dbReference type="GO" id="GO:0003924">
    <property type="term" value="F:GTPase activity"/>
    <property type="evidence" value="ECO:0007669"/>
    <property type="project" value="InterPro"/>
</dbReference>
<dbReference type="GO" id="GO:0003746">
    <property type="term" value="F:translation elongation factor activity"/>
    <property type="evidence" value="ECO:0007669"/>
    <property type="project" value="UniProtKB-UniRule"/>
</dbReference>
<dbReference type="GO" id="GO:0032790">
    <property type="term" value="P:ribosome disassembly"/>
    <property type="evidence" value="ECO:0007669"/>
    <property type="project" value="TreeGrafter"/>
</dbReference>
<dbReference type="CDD" id="cd01886">
    <property type="entry name" value="EF-G"/>
    <property type="match status" value="1"/>
</dbReference>
<dbReference type="CDD" id="cd16262">
    <property type="entry name" value="EFG_III"/>
    <property type="match status" value="1"/>
</dbReference>
<dbReference type="CDD" id="cd01434">
    <property type="entry name" value="EFG_mtEFG1_IV"/>
    <property type="match status" value="1"/>
</dbReference>
<dbReference type="CDD" id="cd03713">
    <property type="entry name" value="EFG_mtEFG_C"/>
    <property type="match status" value="1"/>
</dbReference>
<dbReference type="CDD" id="cd04088">
    <property type="entry name" value="EFG_mtEFG_II"/>
    <property type="match status" value="1"/>
</dbReference>
<dbReference type="FunFam" id="2.40.30.10:FF:000006">
    <property type="entry name" value="Elongation factor G"/>
    <property type="match status" value="1"/>
</dbReference>
<dbReference type="FunFam" id="3.30.230.10:FF:000003">
    <property type="entry name" value="Elongation factor G"/>
    <property type="match status" value="1"/>
</dbReference>
<dbReference type="FunFam" id="3.30.70.240:FF:000001">
    <property type="entry name" value="Elongation factor G"/>
    <property type="match status" value="1"/>
</dbReference>
<dbReference type="FunFam" id="3.30.70.870:FF:000001">
    <property type="entry name" value="Elongation factor G"/>
    <property type="match status" value="1"/>
</dbReference>
<dbReference type="FunFam" id="3.40.50.300:FF:000029">
    <property type="entry name" value="Elongation factor G"/>
    <property type="match status" value="1"/>
</dbReference>
<dbReference type="Gene3D" id="3.30.230.10">
    <property type="match status" value="1"/>
</dbReference>
<dbReference type="Gene3D" id="3.30.70.240">
    <property type="match status" value="1"/>
</dbReference>
<dbReference type="Gene3D" id="3.30.70.870">
    <property type="entry name" value="Elongation Factor G (Translational Gtpase), domain 3"/>
    <property type="match status" value="1"/>
</dbReference>
<dbReference type="Gene3D" id="3.40.50.300">
    <property type="entry name" value="P-loop containing nucleotide triphosphate hydrolases"/>
    <property type="match status" value="1"/>
</dbReference>
<dbReference type="Gene3D" id="2.40.30.10">
    <property type="entry name" value="Translation factors"/>
    <property type="match status" value="1"/>
</dbReference>
<dbReference type="HAMAP" id="MF_00054_B">
    <property type="entry name" value="EF_G_EF_2_B"/>
    <property type="match status" value="1"/>
</dbReference>
<dbReference type="InterPro" id="IPR041095">
    <property type="entry name" value="EFG_II"/>
</dbReference>
<dbReference type="InterPro" id="IPR009022">
    <property type="entry name" value="EFG_III"/>
</dbReference>
<dbReference type="InterPro" id="IPR035647">
    <property type="entry name" value="EFG_III/V"/>
</dbReference>
<dbReference type="InterPro" id="IPR047872">
    <property type="entry name" value="EFG_IV"/>
</dbReference>
<dbReference type="InterPro" id="IPR035649">
    <property type="entry name" value="EFG_V"/>
</dbReference>
<dbReference type="InterPro" id="IPR000640">
    <property type="entry name" value="EFG_V-like"/>
</dbReference>
<dbReference type="InterPro" id="IPR004161">
    <property type="entry name" value="EFTu-like_2"/>
</dbReference>
<dbReference type="InterPro" id="IPR031157">
    <property type="entry name" value="G_TR_CS"/>
</dbReference>
<dbReference type="InterPro" id="IPR027417">
    <property type="entry name" value="P-loop_NTPase"/>
</dbReference>
<dbReference type="InterPro" id="IPR020568">
    <property type="entry name" value="Ribosomal_Su5_D2-typ_SF"/>
</dbReference>
<dbReference type="InterPro" id="IPR014721">
    <property type="entry name" value="Ribsml_uS5_D2-typ_fold_subgr"/>
</dbReference>
<dbReference type="InterPro" id="IPR005225">
    <property type="entry name" value="Small_GTP-bd"/>
</dbReference>
<dbReference type="InterPro" id="IPR000795">
    <property type="entry name" value="T_Tr_GTP-bd_dom"/>
</dbReference>
<dbReference type="InterPro" id="IPR009000">
    <property type="entry name" value="Transl_B-barrel_sf"/>
</dbReference>
<dbReference type="InterPro" id="IPR004540">
    <property type="entry name" value="Transl_elong_EFG/EF2"/>
</dbReference>
<dbReference type="InterPro" id="IPR005517">
    <property type="entry name" value="Transl_elong_EFG/EF2_IV"/>
</dbReference>
<dbReference type="NCBIfam" id="TIGR00484">
    <property type="entry name" value="EF-G"/>
    <property type="match status" value="1"/>
</dbReference>
<dbReference type="NCBIfam" id="NF009379">
    <property type="entry name" value="PRK12740.1-3"/>
    <property type="match status" value="1"/>
</dbReference>
<dbReference type="NCBIfam" id="NF009381">
    <property type="entry name" value="PRK12740.1-5"/>
    <property type="match status" value="1"/>
</dbReference>
<dbReference type="NCBIfam" id="TIGR00231">
    <property type="entry name" value="small_GTP"/>
    <property type="match status" value="1"/>
</dbReference>
<dbReference type="PANTHER" id="PTHR43261:SF1">
    <property type="entry name" value="RIBOSOME-RELEASING FACTOR 2, MITOCHONDRIAL"/>
    <property type="match status" value="1"/>
</dbReference>
<dbReference type="PANTHER" id="PTHR43261">
    <property type="entry name" value="TRANSLATION ELONGATION FACTOR G-RELATED"/>
    <property type="match status" value="1"/>
</dbReference>
<dbReference type="Pfam" id="PF00679">
    <property type="entry name" value="EFG_C"/>
    <property type="match status" value="1"/>
</dbReference>
<dbReference type="Pfam" id="PF14492">
    <property type="entry name" value="EFG_III"/>
    <property type="match status" value="1"/>
</dbReference>
<dbReference type="Pfam" id="PF03764">
    <property type="entry name" value="EFG_IV"/>
    <property type="match status" value="1"/>
</dbReference>
<dbReference type="Pfam" id="PF00009">
    <property type="entry name" value="GTP_EFTU"/>
    <property type="match status" value="1"/>
</dbReference>
<dbReference type="Pfam" id="PF03144">
    <property type="entry name" value="GTP_EFTU_D2"/>
    <property type="match status" value="1"/>
</dbReference>
<dbReference type="PRINTS" id="PR00315">
    <property type="entry name" value="ELONGATNFCT"/>
</dbReference>
<dbReference type="SMART" id="SM00838">
    <property type="entry name" value="EFG_C"/>
    <property type="match status" value="1"/>
</dbReference>
<dbReference type="SMART" id="SM00889">
    <property type="entry name" value="EFG_IV"/>
    <property type="match status" value="1"/>
</dbReference>
<dbReference type="SUPFAM" id="SSF54980">
    <property type="entry name" value="EF-G C-terminal domain-like"/>
    <property type="match status" value="2"/>
</dbReference>
<dbReference type="SUPFAM" id="SSF52540">
    <property type="entry name" value="P-loop containing nucleoside triphosphate hydrolases"/>
    <property type="match status" value="1"/>
</dbReference>
<dbReference type="SUPFAM" id="SSF54211">
    <property type="entry name" value="Ribosomal protein S5 domain 2-like"/>
    <property type="match status" value="1"/>
</dbReference>
<dbReference type="SUPFAM" id="SSF50447">
    <property type="entry name" value="Translation proteins"/>
    <property type="match status" value="1"/>
</dbReference>
<dbReference type="PROSITE" id="PS00301">
    <property type="entry name" value="G_TR_1"/>
    <property type="match status" value="1"/>
</dbReference>
<dbReference type="PROSITE" id="PS51722">
    <property type="entry name" value="G_TR_2"/>
    <property type="match status" value="1"/>
</dbReference>
<comment type="function">
    <text evidence="1">Catalyzes the GTP-dependent ribosomal translocation step during translation elongation. During this step, the ribosome changes from the pre-translocational (PRE) to the post-translocational (POST) state as the newly formed A-site-bound peptidyl-tRNA and P-site-bound deacylated tRNA move to the P and E sites, respectively. Catalyzes the coordinated movement of the two tRNA molecules, the mRNA and conformational changes in the ribosome.</text>
</comment>
<comment type="subcellular location">
    <subcellularLocation>
        <location evidence="1">Cytoplasm</location>
    </subcellularLocation>
</comment>
<comment type="similarity">
    <text evidence="1">Belongs to the TRAFAC class translation factor GTPase superfamily. Classic translation factor GTPase family. EF-G/EF-2 subfamily.</text>
</comment>
<gene>
    <name evidence="1" type="primary">fusA</name>
    <name type="ordered locus">SMU_359</name>
</gene>
<accession>Q8DVV4</accession>
<reference key="1">
    <citation type="journal article" date="2002" name="Proc. Natl. Acad. Sci. U.S.A.">
        <title>Genome sequence of Streptococcus mutans UA159, a cariogenic dental pathogen.</title>
        <authorList>
            <person name="Ajdic D.J."/>
            <person name="McShan W.M."/>
            <person name="McLaughlin R.E."/>
            <person name="Savic G."/>
            <person name="Chang J."/>
            <person name="Carson M.B."/>
            <person name="Primeaux C."/>
            <person name="Tian R."/>
            <person name="Kenton S."/>
            <person name="Jia H.G."/>
            <person name="Lin S.P."/>
            <person name="Qian Y."/>
            <person name="Li S."/>
            <person name="Zhu H."/>
            <person name="Najar F.Z."/>
            <person name="Lai H."/>
            <person name="White J."/>
            <person name="Roe B.A."/>
            <person name="Ferretti J.J."/>
        </authorList>
    </citation>
    <scope>NUCLEOTIDE SEQUENCE [LARGE SCALE GENOMIC DNA]</scope>
    <source>
        <strain>ATCC 700610 / UA159</strain>
    </source>
</reference>
<evidence type="ECO:0000255" key="1">
    <source>
        <dbReference type="HAMAP-Rule" id="MF_00054"/>
    </source>
</evidence>